<proteinExistence type="inferred from homology"/>
<protein>
    <recommendedName>
        <fullName evidence="1">DNA-directed RNA polymerase subunit alpha 1</fullName>
        <shortName evidence="1">RNAP subunit alpha 1</shortName>
        <ecNumber evidence="1">2.7.7.6</ecNumber>
    </recommendedName>
    <alternativeName>
        <fullName evidence="1">RNA polymerase subunit alpha 1</fullName>
    </alternativeName>
    <alternativeName>
        <fullName evidence="1">Transcriptase subunit alpha 1</fullName>
    </alternativeName>
</protein>
<feature type="chain" id="PRO_0000296858" description="DNA-directed RNA polymerase subunit alpha 1">
    <location>
        <begin position="1"/>
        <end position="328"/>
    </location>
</feature>
<feature type="region of interest" description="Alpha N-terminal domain (alpha-NTD)" evidence="1">
    <location>
        <begin position="1"/>
        <end position="234"/>
    </location>
</feature>
<feature type="region of interest" description="Alpha C-terminal domain (alpha-CTD)" evidence="1">
    <location>
        <begin position="248"/>
        <end position="328"/>
    </location>
</feature>
<accession>A1SXW8</accession>
<evidence type="ECO:0000255" key="1">
    <source>
        <dbReference type="HAMAP-Rule" id="MF_00059"/>
    </source>
</evidence>
<name>RPOA1_PSYIN</name>
<dbReference type="EC" id="2.7.7.6" evidence="1"/>
<dbReference type="EMBL" id="CP000510">
    <property type="protein sequence ID" value="ABM04333.1"/>
    <property type="molecule type" value="Genomic_DNA"/>
</dbReference>
<dbReference type="RefSeq" id="WP_011770890.1">
    <property type="nucleotide sequence ID" value="NC_008709.1"/>
</dbReference>
<dbReference type="SMR" id="A1SXW8"/>
<dbReference type="STRING" id="357804.Ping_2614"/>
<dbReference type="KEGG" id="pin:Ping_2614"/>
<dbReference type="eggNOG" id="COG0202">
    <property type="taxonomic scope" value="Bacteria"/>
</dbReference>
<dbReference type="HOGENOM" id="CLU_053084_0_0_6"/>
<dbReference type="OrthoDB" id="9805706at2"/>
<dbReference type="Proteomes" id="UP000000639">
    <property type="component" value="Chromosome"/>
</dbReference>
<dbReference type="GO" id="GO:0005737">
    <property type="term" value="C:cytoplasm"/>
    <property type="evidence" value="ECO:0007669"/>
    <property type="project" value="UniProtKB-ARBA"/>
</dbReference>
<dbReference type="GO" id="GO:0000428">
    <property type="term" value="C:DNA-directed RNA polymerase complex"/>
    <property type="evidence" value="ECO:0007669"/>
    <property type="project" value="UniProtKB-KW"/>
</dbReference>
<dbReference type="GO" id="GO:0003677">
    <property type="term" value="F:DNA binding"/>
    <property type="evidence" value="ECO:0007669"/>
    <property type="project" value="UniProtKB-UniRule"/>
</dbReference>
<dbReference type="GO" id="GO:0003899">
    <property type="term" value="F:DNA-directed RNA polymerase activity"/>
    <property type="evidence" value="ECO:0007669"/>
    <property type="project" value="UniProtKB-UniRule"/>
</dbReference>
<dbReference type="GO" id="GO:0046983">
    <property type="term" value="F:protein dimerization activity"/>
    <property type="evidence" value="ECO:0007669"/>
    <property type="project" value="InterPro"/>
</dbReference>
<dbReference type="GO" id="GO:0006351">
    <property type="term" value="P:DNA-templated transcription"/>
    <property type="evidence" value="ECO:0007669"/>
    <property type="project" value="UniProtKB-UniRule"/>
</dbReference>
<dbReference type="CDD" id="cd06928">
    <property type="entry name" value="RNAP_alpha_NTD"/>
    <property type="match status" value="1"/>
</dbReference>
<dbReference type="FunFam" id="1.10.150.20:FF:000001">
    <property type="entry name" value="DNA-directed RNA polymerase subunit alpha"/>
    <property type="match status" value="1"/>
</dbReference>
<dbReference type="FunFam" id="2.170.120.12:FF:000001">
    <property type="entry name" value="DNA-directed RNA polymerase subunit alpha"/>
    <property type="match status" value="1"/>
</dbReference>
<dbReference type="Gene3D" id="1.10.150.20">
    <property type="entry name" value="5' to 3' exonuclease, C-terminal subdomain"/>
    <property type="match status" value="1"/>
</dbReference>
<dbReference type="Gene3D" id="2.170.120.12">
    <property type="entry name" value="DNA-directed RNA polymerase, insert domain"/>
    <property type="match status" value="1"/>
</dbReference>
<dbReference type="Gene3D" id="3.30.1360.10">
    <property type="entry name" value="RNA polymerase, RBP11-like subunit"/>
    <property type="match status" value="1"/>
</dbReference>
<dbReference type="HAMAP" id="MF_00059">
    <property type="entry name" value="RNApol_bact_RpoA"/>
    <property type="match status" value="1"/>
</dbReference>
<dbReference type="InterPro" id="IPR011262">
    <property type="entry name" value="DNA-dir_RNA_pol_insert"/>
</dbReference>
<dbReference type="InterPro" id="IPR011263">
    <property type="entry name" value="DNA-dir_RNA_pol_RpoA/D/Rpb3"/>
</dbReference>
<dbReference type="InterPro" id="IPR011773">
    <property type="entry name" value="DNA-dir_RpoA"/>
</dbReference>
<dbReference type="InterPro" id="IPR036603">
    <property type="entry name" value="RBP11-like"/>
</dbReference>
<dbReference type="InterPro" id="IPR011260">
    <property type="entry name" value="RNAP_asu_C"/>
</dbReference>
<dbReference type="InterPro" id="IPR036643">
    <property type="entry name" value="RNApol_insert_sf"/>
</dbReference>
<dbReference type="NCBIfam" id="NF003513">
    <property type="entry name" value="PRK05182.1-2"/>
    <property type="match status" value="1"/>
</dbReference>
<dbReference type="NCBIfam" id="NF003519">
    <property type="entry name" value="PRK05182.2-5"/>
    <property type="match status" value="1"/>
</dbReference>
<dbReference type="NCBIfam" id="TIGR02027">
    <property type="entry name" value="rpoA"/>
    <property type="match status" value="1"/>
</dbReference>
<dbReference type="Pfam" id="PF01000">
    <property type="entry name" value="RNA_pol_A_bac"/>
    <property type="match status" value="1"/>
</dbReference>
<dbReference type="Pfam" id="PF03118">
    <property type="entry name" value="RNA_pol_A_CTD"/>
    <property type="match status" value="1"/>
</dbReference>
<dbReference type="Pfam" id="PF01193">
    <property type="entry name" value="RNA_pol_L"/>
    <property type="match status" value="1"/>
</dbReference>
<dbReference type="SMART" id="SM00662">
    <property type="entry name" value="RPOLD"/>
    <property type="match status" value="1"/>
</dbReference>
<dbReference type="SUPFAM" id="SSF47789">
    <property type="entry name" value="C-terminal domain of RNA polymerase alpha subunit"/>
    <property type="match status" value="1"/>
</dbReference>
<dbReference type="SUPFAM" id="SSF56553">
    <property type="entry name" value="Insert subdomain of RNA polymerase alpha subunit"/>
    <property type="match status" value="1"/>
</dbReference>
<dbReference type="SUPFAM" id="SSF55257">
    <property type="entry name" value="RBP11-like subunits of RNA polymerase"/>
    <property type="match status" value="1"/>
</dbReference>
<sequence>MQGFVKDFLKPNLVGIEQINATRAKVTLEPLERGFGHTLGNALRRILLSSMPGAAITEVEIDGVQNEYSIKEGVQEEILEILLNLKGLAVKLEGKNEVLVSLTKSGAGPVIAADITHDSDLEIVNPEHVICHLTGNTEISMRIKIELGRGYVPASSRIHSEEDKSANGRLFVDATFSPVERIAYSVESARVEQRTNLDKLVIDMETDGTLEPEEAIRQAAMILAGQLDEFVDERIISAPVEVEEKPEFDPILLRPVNDLELTVRSANCLKAESIYYIGDLVQRTEVELLKMPNLGRKSLTEIKDDLVSRGLYLGMRLENWPPASLIED</sequence>
<comment type="function">
    <text evidence="1">DNA-dependent RNA polymerase catalyzes the transcription of DNA into RNA using the four ribonucleoside triphosphates as substrates.</text>
</comment>
<comment type="catalytic activity">
    <reaction evidence="1">
        <text>RNA(n) + a ribonucleoside 5'-triphosphate = RNA(n+1) + diphosphate</text>
        <dbReference type="Rhea" id="RHEA:21248"/>
        <dbReference type="Rhea" id="RHEA-COMP:14527"/>
        <dbReference type="Rhea" id="RHEA-COMP:17342"/>
        <dbReference type="ChEBI" id="CHEBI:33019"/>
        <dbReference type="ChEBI" id="CHEBI:61557"/>
        <dbReference type="ChEBI" id="CHEBI:140395"/>
        <dbReference type="EC" id="2.7.7.6"/>
    </reaction>
</comment>
<comment type="subunit">
    <text evidence="1">Homodimer. The RNAP catalytic core consists of 2 alpha, 1 beta, 1 beta' and 1 omega subunit. When a sigma factor is associated with the core the holoenzyme is formed, which can initiate transcription.</text>
</comment>
<comment type="domain">
    <text evidence="1">The N-terminal domain is essential for RNAP assembly and basal transcription, whereas the C-terminal domain is involved in interaction with transcriptional regulators and with upstream promoter elements.</text>
</comment>
<comment type="similarity">
    <text evidence="1">Belongs to the RNA polymerase alpha chain family.</text>
</comment>
<reference key="1">
    <citation type="journal article" date="2008" name="BMC Genomics">
        <title>Genomics of an extreme psychrophile, Psychromonas ingrahamii.</title>
        <authorList>
            <person name="Riley M."/>
            <person name="Staley J.T."/>
            <person name="Danchin A."/>
            <person name="Wang T.Z."/>
            <person name="Brettin T.S."/>
            <person name="Hauser L.J."/>
            <person name="Land M.L."/>
            <person name="Thompson L.S."/>
        </authorList>
    </citation>
    <scope>NUCLEOTIDE SEQUENCE [LARGE SCALE GENOMIC DNA]</scope>
    <source>
        <strain>DSM 17664 / CCUG 51855 / 37</strain>
    </source>
</reference>
<organism>
    <name type="scientific">Psychromonas ingrahamii (strain DSM 17664 / CCUG 51855 / 37)</name>
    <dbReference type="NCBI Taxonomy" id="357804"/>
    <lineage>
        <taxon>Bacteria</taxon>
        <taxon>Pseudomonadati</taxon>
        <taxon>Pseudomonadota</taxon>
        <taxon>Gammaproteobacteria</taxon>
        <taxon>Alteromonadales</taxon>
        <taxon>Psychromonadaceae</taxon>
        <taxon>Psychromonas</taxon>
    </lineage>
</organism>
<gene>
    <name evidence="1" type="primary">rpoA1</name>
    <name type="ordered locus">Ping_2614</name>
</gene>
<keyword id="KW-0240">DNA-directed RNA polymerase</keyword>
<keyword id="KW-0548">Nucleotidyltransferase</keyword>
<keyword id="KW-1185">Reference proteome</keyword>
<keyword id="KW-0804">Transcription</keyword>
<keyword id="KW-0808">Transferase</keyword>